<evidence type="ECO:0000250" key="1">
    <source>
        <dbReference type="UniProtKB" id="P00509"/>
    </source>
</evidence>
<evidence type="ECO:0000255" key="2"/>
<evidence type="ECO:0000269" key="3">
    <source>
    </source>
</evidence>
<evidence type="ECO:0000269" key="4">
    <source>
    </source>
</evidence>
<evidence type="ECO:0000269" key="5">
    <source>
    </source>
</evidence>
<evidence type="ECO:0000269" key="6">
    <source>
    </source>
</evidence>
<evidence type="ECO:0000269" key="7">
    <source>
    </source>
</evidence>
<evidence type="ECO:0000269" key="8">
    <source>
    </source>
</evidence>
<evidence type="ECO:0000269" key="9">
    <source>
    </source>
</evidence>
<evidence type="ECO:0000269" key="10">
    <source>
    </source>
</evidence>
<evidence type="ECO:0000269" key="11">
    <source>
    </source>
</evidence>
<evidence type="ECO:0000269" key="12">
    <source>
    </source>
</evidence>
<evidence type="ECO:0000269" key="13">
    <source>
    </source>
</evidence>
<evidence type="ECO:0000269" key="14">
    <source>
    </source>
</evidence>
<evidence type="ECO:0000303" key="15">
    <source>
    </source>
</evidence>
<evidence type="ECO:0000305" key="16"/>
<evidence type="ECO:0000305" key="17">
    <source>
    </source>
</evidence>
<proteinExistence type="evidence at transcript level"/>
<gene>
    <name evidence="15" type="primary">gliI</name>
    <name type="ORF">AFUA_6G09640</name>
</gene>
<accession>Q4WMJ9</accession>
<accession>Q5MBT7</accession>
<comment type="function">
    <text evidence="3 4 5 6 7 8 9 10 11 13 14">Probable aminotransferase; part of the gene cluster that mediates the biosynthesis of gliotoxin, a member of the epipolythiodioxopiperazine (ETP) class of toxins characterized by a disulfide bridged cyclic dipeptide (PubMed:15979823, PubMed:21612254). The first step in gliotoxin biosynthesis is the condensation of serine and phenylalanine to form the cyclo-L-phenylalanyl-L-serine diketopiperazine (DKP) by the NRPS gliP (PubMed:17154540, PubMed:21612254). GliP is also able to produce the DKP cyclo-L-tryptophanyl-L-serine, suggesting that the substrate specificity of the first adenylation (A) domain in gliP is sufficiently relaxed to accommodate both L-Phe and L-Trp (PubMed:23434416). The cytochrome P450 monooxygenase gliC has been shown to catalyze the subsequent hydroxylation of the alpha-carbon of L-Phe in cyclo-L-phenylalanyl-L-serine whereas the second cytochrome P450 enzyme, gliF, is presumably involved in the modification of the DKP side chain (PubMed:23434416, PubMed:24039048). The glutathione S-transferase (GST) gliG then forms a bis-glutathionylated biosynthetic intermediate which is responsible for the sulfurization of gliotoxin (PubMed:21513890, PubMed:21749092). This bis-glutathionylated intermediate is subsequently processed by the gamma-glutamyl cyclotransferase gliK to remove both gamma-glutamyl moieties (PubMed:22903976, PubMed:24039048). Subsequent processing via gliI yields a biosynthetic intermediate, which is N-methylated via the N-methyltransferase gliN, before the gliotoxin oxidoreductase gliT-mediated disulfide bridge closure (PubMed:20548963, PubMed:22936680, PubMed:24039048, PubMed:25062268). GliN-mediated amide methylation confers stability to ETP, damping the spontaneous formation of tri- and tetrasulfides (PubMed:25062268). Intracellular dithiol gliotoxin oxidized by gliT is subsequently effluxed by gliA (PubMed:26150413). Gliotoxin contributes to pathogenesis during invasive aspergillosis (PubMed:17601876, PubMed:18199036). In macrophages and neutrophils, gliotoxin showed inhibition of various different cell functions including cytokine production, antigen presentation, phagocytosis, and production of reactive oxygen species (PubMed:17601876).</text>
</comment>
<comment type="cofactor">
    <cofactor evidence="1">
        <name>pyridoxal 5'-phosphate</name>
        <dbReference type="ChEBI" id="CHEBI:597326"/>
    </cofactor>
</comment>
<comment type="pathway">
    <text evidence="17">Mycotoxin biosynthesis.</text>
</comment>
<comment type="induction">
    <text evidence="12">Expression is also regulated by rsmA (PubMed:23671611).</text>
</comment>
<comment type="similarity">
    <text evidence="2">Belongs to the class-I pyridoxal-phosphate-dependent aminotransferase family.</text>
</comment>
<comment type="sequence caution" evidence="16">
    <conflict type="erroneous gene model prediction">
        <sequence resource="EMBL-CDS" id="AAW03309"/>
    </conflict>
</comment>
<sequence length="435" mass="48217">MPSETITPLLAHRARTNIQWFTHKHMRQVSRLNAKQHRVNMMTAENWSIRDELVDQYKTLFAQHLSPRHLSYADGMGGDAELLQAAADFFNRVFAAHSRVQPAHLVVGAGCSSLLENLLYDICEPGEGVLIETPFWGGFETSFVLRSNVTAVHVRPPCHGNGSADLDRLVSAYIEAYERALRQAPCRIKAILVCNPHNPCGHIYPPRVIQALLQFAQRHDLFYISDEIYALSTLDEQTAFTSVLSIDVAALGVDLARVFTLYSISKDLGSSGLRLGFGITQAHPDLRLSLAISNHSRVSTFTSLVITALLHDPEAATAILHQNRAALQRSAKLISDFLAFHQIPFVPPAAGVYVWARLGWRSSSRPGDEPSWDEEARLNDRFEAAGVSVGAGQGYCASEPGWFRITFAIPREELVAGLRRIEQVVGMEGQKWTAI</sequence>
<dbReference type="EC" id="2.6.1.-" evidence="17"/>
<dbReference type="EMBL" id="AY838877">
    <property type="protein sequence ID" value="AAW03309.1"/>
    <property type="status" value="ALT_SEQ"/>
    <property type="molecule type" value="Genomic_DNA"/>
</dbReference>
<dbReference type="EMBL" id="AAHF01000006">
    <property type="protein sequence ID" value="EAL88815.1"/>
    <property type="molecule type" value="Genomic_DNA"/>
</dbReference>
<dbReference type="RefSeq" id="XP_750853.1">
    <property type="nucleotide sequence ID" value="XM_745760.1"/>
</dbReference>
<dbReference type="SMR" id="Q4WMJ9"/>
<dbReference type="STRING" id="330879.Q4WMJ9"/>
<dbReference type="EnsemblFungi" id="EAL88815">
    <property type="protein sequence ID" value="EAL88815"/>
    <property type="gene ID" value="AFUA_6G09640"/>
</dbReference>
<dbReference type="GeneID" id="3508158"/>
<dbReference type="KEGG" id="afm:AFUA_6G09640"/>
<dbReference type="VEuPathDB" id="FungiDB:Afu6g09640"/>
<dbReference type="eggNOG" id="KOG0256">
    <property type="taxonomic scope" value="Eukaryota"/>
</dbReference>
<dbReference type="HOGENOM" id="CLU_017584_1_2_1"/>
<dbReference type="InParanoid" id="Q4WMJ9"/>
<dbReference type="OMA" id="WGGFETS"/>
<dbReference type="OrthoDB" id="1077582at2759"/>
<dbReference type="Proteomes" id="UP000002530">
    <property type="component" value="Chromosome 6"/>
</dbReference>
<dbReference type="GO" id="GO:0016846">
    <property type="term" value="F:carbon-sulfur lyase activity"/>
    <property type="evidence" value="ECO:0000315"/>
    <property type="project" value="AspGD"/>
</dbReference>
<dbReference type="GO" id="GO:0030170">
    <property type="term" value="F:pyridoxal phosphate binding"/>
    <property type="evidence" value="ECO:0007669"/>
    <property type="project" value="InterPro"/>
</dbReference>
<dbReference type="GO" id="GO:0008483">
    <property type="term" value="F:transaminase activity"/>
    <property type="evidence" value="ECO:0000318"/>
    <property type="project" value="GO_Central"/>
</dbReference>
<dbReference type="GO" id="GO:0006520">
    <property type="term" value="P:amino acid metabolic process"/>
    <property type="evidence" value="ECO:0000318"/>
    <property type="project" value="GO_Central"/>
</dbReference>
<dbReference type="GO" id="GO:2001310">
    <property type="term" value="P:gliotoxin biosynthetic process"/>
    <property type="evidence" value="ECO:0000315"/>
    <property type="project" value="AspGD"/>
</dbReference>
<dbReference type="GO" id="GO:0043386">
    <property type="term" value="P:mycotoxin biosynthetic process"/>
    <property type="evidence" value="ECO:0000270"/>
    <property type="project" value="AspGD"/>
</dbReference>
<dbReference type="CDD" id="cd00609">
    <property type="entry name" value="AAT_like"/>
    <property type="match status" value="1"/>
</dbReference>
<dbReference type="Gene3D" id="3.90.1150.10">
    <property type="entry name" value="Aspartate Aminotransferase, domain 1"/>
    <property type="match status" value="1"/>
</dbReference>
<dbReference type="Gene3D" id="3.40.640.10">
    <property type="entry name" value="Type I PLP-dependent aspartate aminotransferase-like (Major domain)"/>
    <property type="match status" value="1"/>
</dbReference>
<dbReference type="InterPro" id="IPR004839">
    <property type="entry name" value="Aminotransferase_I/II_large"/>
</dbReference>
<dbReference type="InterPro" id="IPR050478">
    <property type="entry name" value="Ethylene_sulfur-biosynth"/>
</dbReference>
<dbReference type="InterPro" id="IPR015424">
    <property type="entry name" value="PyrdxlP-dep_Trfase"/>
</dbReference>
<dbReference type="InterPro" id="IPR015421">
    <property type="entry name" value="PyrdxlP-dep_Trfase_major"/>
</dbReference>
<dbReference type="InterPro" id="IPR015422">
    <property type="entry name" value="PyrdxlP-dep_Trfase_small"/>
</dbReference>
<dbReference type="PANTHER" id="PTHR43795:SF32">
    <property type="entry name" value="AMINOTRANSFERASE GLII-RELATED"/>
    <property type="match status" value="1"/>
</dbReference>
<dbReference type="PANTHER" id="PTHR43795">
    <property type="entry name" value="BIFUNCTIONAL ASPARTATE AMINOTRANSFERASE AND GLUTAMATE/ASPARTATE-PREPHENATE AMINOTRANSFERASE-RELATED"/>
    <property type="match status" value="1"/>
</dbReference>
<dbReference type="Pfam" id="PF00155">
    <property type="entry name" value="Aminotran_1_2"/>
    <property type="match status" value="1"/>
</dbReference>
<dbReference type="PRINTS" id="PR00753">
    <property type="entry name" value="ACCSYNTHASE"/>
</dbReference>
<dbReference type="SUPFAM" id="SSF53383">
    <property type="entry name" value="PLP-dependent transferases"/>
    <property type="match status" value="1"/>
</dbReference>
<name>GLII_ASPFU</name>
<keyword id="KW-0032">Aminotransferase</keyword>
<keyword id="KW-0663">Pyridoxal phosphate</keyword>
<keyword id="KW-1185">Reference proteome</keyword>
<keyword id="KW-0808">Transferase</keyword>
<keyword id="KW-0843">Virulence</keyword>
<organism>
    <name type="scientific">Aspergillus fumigatus (strain ATCC MYA-4609 / CBS 101355 / FGSC A1100 / Af293)</name>
    <name type="common">Neosartorya fumigata</name>
    <dbReference type="NCBI Taxonomy" id="330879"/>
    <lineage>
        <taxon>Eukaryota</taxon>
        <taxon>Fungi</taxon>
        <taxon>Dikarya</taxon>
        <taxon>Ascomycota</taxon>
        <taxon>Pezizomycotina</taxon>
        <taxon>Eurotiomycetes</taxon>
        <taxon>Eurotiomycetidae</taxon>
        <taxon>Eurotiales</taxon>
        <taxon>Aspergillaceae</taxon>
        <taxon>Aspergillus</taxon>
        <taxon>Aspergillus subgen. Fumigati</taxon>
    </lineage>
</organism>
<protein>
    <recommendedName>
        <fullName evidence="15">Probable aminotransferase gliI</fullName>
        <ecNumber evidence="17">2.6.1.-</ecNumber>
    </recommendedName>
    <alternativeName>
        <fullName evidence="15">Gliotoxin biosynthesis protein I</fullName>
    </alternativeName>
</protein>
<feature type="chain" id="PRO_0000437719" description="Probable aminotransferase gliI">
    <location>
        <begin position="1"/>
        <end position="435"/>
    </location>
</feature>
<feature type="modified residue" description="N6-(pyridoxal phosphate)lysine" evidence="1">
    <location>
        <position position="266"/>
    </location>
</feature>
<reference key="1">
    <citation type="journal article" date="2005" name="FEMS Microbiol. Lett.">
        <title>Bioinformatic and expression analysis of the putative gliotoxin biosynthetic gene cluster of Aspergillus fumigatus.</title>
        <authorList>
            <person name="Gardiner D.M."/>
            <person name="Howlett B.J."/>
        </authorList>
    </citation>
    <scope>NUCLEOTIDE SEQUENCE [GENOMIC DNA]</scope>
    <scope>FUNCTION</scope>
    <source>
        <strain>ATCC MYA-4609 / CBS 101355 / FGSC A1100 / Af293</strain>
    </source>
</reference>
<reference key="2">
    <citation type="journal article" date="2005" name="Nature">
        <title>Genomic sequence of the pathogenic and allergenic filamentous fungus Aspergillus fumigatus.</title>
        <authorList>
            <person name="Nierman W.C."/>
            <person name="Pain A."/>
            <person name="Anderson M.J."/>
            <person name="Wortman J.R."/>
            <person name="Kim H.S."/>
            <person name="Arroyo J."/>
            <person name="Berriman M."/>
            <person name="Abe K."/>
            <person name="Archer D.B."/>
            <person name="Bermejo C."/>
            <person name="Bennett J.W."/>
            <person name="Bowyer P."/>
            <person name="Chen D."/>
            <person name="Collins M."/>
            <person name="Coulsen R."/>
            <person name="Davies R."/>
            <person name="Dyer P.S."/>
            <person name="Farman M.L."/>
            <person name="Fedorova N."/>
            <person name="Fedorova N.D."/>
            <person name="Feldblyum T.V."/>
            <person name="Fischer R."/>
            <person name="Fosker N."/>
            <person name="Fraser A."/>
            <person name="Garcia J.L."/>
            <person name="Garcia M.J."/>
            <person name="Goble A."/>
            <person name="Goldman G.H."/>
            <person name="Gomi K."/>
            <person name="Griffith-Jones S."/>
            <person name="Gwilliam R."/>
            <person name="Haas B.J."/>
            <person name="Haas H."/>
            <person name="Harris D.E."/>
            <person name="Horiuchi H."/>
            <person name="Huang J."/>
            <person name="Humphray S."/>
            <person name="Jimenez J."/>
            <person name="Keller N."/>
            <person name="Khouri H."/>
            <person name="Kitamoto K."/>
            <person name="Kobayashi T."/>
            <person name="Konzack S."/>
            <person name="Kulkarni R."/>
            <person name="Kumagai T."/>
            <person name="Lafton A."/>
            <person name="Latge J.-P."/>
            <person name="Li W."/>
            <person name="Lord A."/>
            <person name="Lu C."/>
            <person name="Majoros W.H."/>
            <person name="May G.S."/>
            <person name="Miller B.L."/>
            <person name="Mohamoud Y."/>
            <person name="Molina M."/>
            <person name="Monod M."/>
            <person name="Mouyna I."/>
            <person name="Mulligan S."/>
            <person name="Murphy L.D."/>
            <person name="O'Neil S."/>
            <person name="Paulsen I."/>
            <person name="Penalva M.A."/>
            <person name="Pertea M."/>
            <person name="Price C."/>
            <person name="Pritchard B.L."/>
            <person name="Quail M.A."/>
            <person name="Rabbinowitsch E."/>
            <person name="Rawlins N."/>
            <person name="Rajandream M.A."/>
            <person name="Reichard U."/>
            <person name="Renauld H."/>
            <person name="Robson G.D."/>
            <person name="Rodriguez de Cordoba S."/>
            <person name="Rodriguez-Pena J.M."/>
            <person name="Ronning C.M."/>
            <person name="Rutter S."/>
            <person name="Salzberg S.L."/>
            <person name="Sanchez M."/>
            <person name="Sanchez-Ferrero J.C."/>
            <person name="Saunders D."/>
            <person name="Seeger K."/>
            <person name="Squares R."/>
            <person name="Squares S."/>
            <person name="Takeuchi M."/>
            <person name="Tekaia F."/>
            <person name="Turner G."/>
            <person name="Vazquez de Aldana C.R."/>
            <person name="Weidman J."/>
            <person name="White O."/>
            <person name="Woodward J.R."/>
            <person name="Yu J.-H."/>
            <person name="Fraser C.M."/>
            <person name="Galagan J.E."/>
            <person name="Asai K."/>
            <person name="Machida M."/>
            <person name="Hall N."/>
            <person name="Barrell B.G."/>
            <person name="Denning D.W."/>
        </authorList>
    </citation>
    <scope>NUCLEOTIDE SEQUENCE [LARGE SCALE GENOMIC DNA]</scope>
    <source>
        <strain>ATCC MYA-4609 / CBS 101355 / FGSC A1100 / Af293</strain>
    </source>
</reference>
<reference key="3">
    <citation type="journal article" date="2006" name="Biochemistry">
        <title>GliP, a multimodular nonribosomal peptide synthetase in Aspergillus fumigatus, makes the diketopiperazine scaffold of gliotoxin.</title>
        <authorList>
            <person name="Balibar C.J."/>
            <person name="Walsh C.T."/>
        </authorList>
    </citation>
    <scope>FUNCTION</scope>
</reference>
<reference key="4">
    <citation type="journal article" date="2007" name="Eukaryot. Cell">
        <title>Gliotoxin is a virulence factor of Aspergillus fumigatus: gliP deletion attenuates virulence in mice immunosuppressed with hydrocortisone.</title>
        <authorList>
            <person name="Sugui J.A."/>
            <person name="Pardo J."/>
            <person name="Chang Y.C."/>
            <person name="Zarember K.A."/>
            <person name="Nardone G."/>
            <person name="Galvez E.M."/>
            <person name="Mullbacher A."/>
            <person name="Gallin J.I."/>
            <person name="Simon M.M."/>
            <person name="Kwon-Chung K.J."/>
        </authorList>
    </citation>
    <scope>FUNCTION</scope>
</reference>
<reference key="5">
    <citation type="journal article" date="2008" name="J. Infect. Dis.">
        <title>Gliotoxin production in Aspergillus fumigatus contributes to host-specific differences in virulence.</title>
        <authorList>
            <person name="Spikes S."/>
            <person name="Xu R."/>
            <person name="Nguyen C.K."/>
            <person name="Chamilos G."/>
            <person name="Kontoyiannis D.P."/>
            <person name="Jacobson R.H."/>
            <person name="Ejzykowicz D.E."/>
            <person name="Chiang L.Y."/>
            <person name="Filler S.G."/>
            <person name="May G.S."/>
        </authorList>
    </citation>
    <scope>FUNCTION</scope>
</reference>
<reference key="6">
    <citation type="journal article" date="2010" name="PLoS Pathog.">
        <title>Self-protection against gliotoxin--a component of the gliotoxin biosynthetic cluster, GliT, completely protects Aspergillus fumigatus against exogenous gliotoxin.</title>
        <authorList>
            <person name="Schrettl M."/>
            <person name="Carberry S."/>
            <person name="Kavanagh K."/>
            <person name="Haas H."/>
            <person name="Jones G.W."/>
            <person name="O'Brien J."/>
            <person name="Nolan A."/>
            <person name="Stephens J."/>
            <person name="Fenelon O."/>
            <person name="Doyle S."/>
        </authorList>
    </citation>
    <scope>FUNCTION</scope>
</reference>
<reference key="7">
    <citation type="journal article" date="2011" name="Chem. Biol.">
        <title>The role of glutathione S-transferase GliG in gliotoxin biosynthesis in Aspergillus fumigatus.</title>
        <authorList>
            <person name="Davis C."/>
            <person name="Carberry S."/>
            <person name="Schrettl M."/>
            <person name="Singh I."/>
            <person name="Stephens J.C."/>
            <person name="Barry S.M."/>
            <person name="Kavanagh K."/>
            <person name="Challis G.L."/>
            <person name="Brougham D."/>
            <person name="Doyle S."/>
        </authorList>
    </citation>
    <scope>FUNCTION</scope>
</reference>
<reference key="8">
    <citation type="journal article" date="2011" name="J. Am. Chem. Soc.">
        <title>Identification of cryptic products of the gliotoxin gene cluster using NMR-based comparative metabolomics and a model for gliotoxin biosynthesis.</title>
        <authorList>
            <person name="Forseth R.R."/>
            <person name="Fox E.M."/>
            <person name="Chung D."/>
            <person name="Howlett B.J."/>
            <person name="Keller N.P."/>
            <person name="Schroeder F.C."/>
        </authorList>
    </citation>
    <scope>FUNCTION</scope>
</reference>
<reference key="9">
    <citation type="journal article" date="2011" name="J. Am. Chem. Soc.">
        <title>A dedicated glutathione S-transferase mediates carbon-sulfur bond formation in gliotoxin biosynthesis.</title>
        <authorList>
            <person name="Scharf D.H."/>
            <person name="Remme N."/>
            <person name="Habel A."/>
            <person name="Chankhamjon P."/>
            <person name="Scherlach K."/>
            <person name="Heinekamp T."/>
            <person name="Hortschansky P."/>
            <person name="Brakhage A.A."/>
            <person name="Hertweck C."/>
        </authorList>
    </citation>
    <scope>FUNCTION</scope>
</reference>
<reference key="10">
    <citation type="journal article" date="2012" name="Angew. Chem. Int. Ed.">
        <title>Epidithiol formation by an unprecedented twin carbon-sulfur lyase in the gliotoxin pathway.</title>
        <authorList>
            <person name="Scharf D.H."/>
            <person name="Chankhamjon P."/>
            <person name="Scherlach K."/>
            <person name="Heinekamp T."/>
            <person name="Roth M."/>
            <person name="Brakhage A.A."/>
            <person name="Hertweck C."/>
        </authorList>
    </citation>
    <scope>FUNCTION</scope>
</reference>
<reference key="11">
    <citation type="journal article" date="2012" name="Eukaryot. Cell">
        <title>The Aspergillus fumigatus protein GliK protects against oxidative stress and is essential for gliotoxin biosynthesis.</title>
        <authorList>
            <person name="Gallagher L."/>
            <person name="Owens R.A."/>
            <person name="Dolan S.K."/>
            <person name="O'Keeffe G."/>
            <person name="Schrettl M."/>
            <person name="Kavanagh K."/>
            <person name="Jones G.W."/>
            <person name="Doyle S."/>
        </authorList>
    </citation>
    <scope>FUNCTION</scope>
</reference>
<reference key="12">
    <citation type="journal article" date="2013" name="Angew. Chem. Int. Ed.">
        <title>Epidithiodiketopiperazine biosynthesis: a four-enzyme cascade converts glutathione conjugates into transannular disulfide bridges.</title>
        <authorList>
            <person name="Scharf D.H."/>
            <person name="Chankhamjon P."/>
            <person name="Scherlach K."/>
            <person name="Heinekamp T."/>
            <person name="Willing K."/>
            <person name="Brakhage A.A."/>
            <person name="Hertweck C."/>
        </authorList>
    </citation>
    <scope>FUNCTION</scope>
</reference>
<reference key="13">
    <citation type="journal article" date="2013" name="Bioorg. Med. Chem. Lett.">
        <title>Reconstitution of the early steps of gliotoxin biosynthesis in Aspergillus nidulans reveals the role of the monooxygenase GliC.</title>
        <authorList>
            <person name="Chang S.L."/>
            <person name="Chiang Y.M."/>
            <person name="Yeh H.H."/>
            <person name="Wu T.K."/>
            <person name="Wang C.C."/>
        </authorList>
    </citation>
    <scope>FUNCTION</scope>
</reference>
<reference key="14">
    <citation type="journal article" date="2013" name="PLoS ONE">
        <title>RsmA regulates Aspergillus fumigatus gliotoxin cluster metabolites including cyclo(L-Phe-L-Ser), a potential new diagnostic marker for invasive aspergillosis.</title>
        <authorList>
            <person name="Sekonyela R."/>
            <person name="Palmer J.M."/>
            <person name="Bok J.W."/>
            <person name="Jain S."/>
            <person name="Berthier E."/>
            <person name="Forseth R."/>
            <person name="Schroeder F."/>
            <person name="Keller N.P."/>
        </authorList>
    </citation>
    <scope>INDUCTION</scope>
</reference>
<reference key="15">
    <citation type="journal article" date="2014" name="J. Am. Chem. Soc.">
        <title>Opposed effects of enzymatic gliotoxin N- and S-methylations.</title>
        <authorList>
            <person name="Scharf D.H."/>
            <person name="Habel A."/>
            <person name="Heinekamp T."/>
            <person name="Brakhage A.A."/>
            <person name="Hertweck C."/>
        </authorList>
    </citation>
    <scope>FUNCTION</scope>
</reference>
<reference key="16">
    <citation type="journal article" date="2015" name="Eukaryot. Cell">
        <title>Interplay between gliotoxin resistance, secretion, and the methyl/methionine cycle in Aspergillus fumigatus.</title>
        <authorList>
            <person name="Owens R.A."/>
            <person name="O'Keeffe G."/>
            <person name="Smith E.B."/>
            <person name="Dolan S.K."/>
            <person name="Hammel S."/>
            <person name="Sheridan K.J."/>
            <person name="Fitzpatrick D.A."/>
            <person name="Keane T.M."/>
            <person name="Jones G.W."/>
            <person name="Doyle S."/>
        </authorList>
    </citation>
    <scope>FUNCTION</scope>
</reference>